<organism>
    <name type="scientific">Pseudomonas phage KPP10</name>
    <name type="common">Bacteriophage KPP10</name>
    <dbReference type="NCBI Taxonomy" id="582345"/>
    <lineage>
        <taxon>Viruses</taxon>
        <taxon>Duplodnaviria</taxon>
        <taxon>Heunggongvirae</taxon>
        <taxon>Uroviricota</taxon>
        <taxon>Caudoviricetes</taxon>
        <taxon>Nankokuvirus</taxon>
        <taxon>Nankokuvirus KPP10</taxon>
    </lineage>
</organism>
<protein>
    <recommendedName>
        <fullName evidence="1">Major capsid protein</fullName>
    </recommendedName>
    <alternativeName>
        <fullName evidence="3">Gene product 4</fullName>
        <shortName evidence="3">gp4</shortName>
    </alternativeName>
    <alternativeName>
        <fullName evidence="1">Major head protein</fullName>
    </alternativeName>
</protein>
<evidence type="ECO:0000255" key="1">
    <source>
        <dbReference type="HAMAP-Rule" id="MF_04133"/>
    </source>
</evidence>
<evidence type="ECO:0000269" key="2">
    <source>
    </source>
</evidence>
<evidence type="ECO:0000305" key="3"/>
<evidence type="ECO:0000312" key="4">
    <source>
        <dbReference type="EMBL" id="BAJ09125.1"/>
    </source>
</evidence>
<name>CAPSD_BPKPP</name>
<keyword id="KW-0167">Capsid protein</keyword>
<keyword id="KW-0903">Direct protein sequencing</keyword>
<keyword id="KW-1035">Host cytoplasm</keyword>
<keyword id="KW-0426">Late protein</keyword>
<keyword id="KW-1185">Reference proteome</keyword>
<keyword id="KW-0946">Virion</keyword>
<comment type="function">
    <text evidence="1">Assembles to form an icosahedral capsid. The assembly is primed by the interaction between capsid assembly protease and portal dodecamer, and major capsid proteins assemble cooperatively to form the procapsid with the help of capsid scaffolding protein. Major capsid protein forms hexons and pentons of the icosahedron. Viral genomic DNA is packaged into the procapsid through the portal vertex. The packaging triggers a dramatic reconfiguration of the capsid shell.</text>
</comment>
<comment type="subunit">
    <text evidence="1">Homomultimer.</text>
</comment>
<comment type="subcellular location">
    <subcellularLocation>
        <location evidence="1 2">Virion</location>
    </subcellularLocation>
    <subcellularLocation>
        <location evidence="1">Host cytoplasm</location>
    </subcellularLocation>
    <text evidence="1">Forms the capsid icosahedric shell.</text>
</comment>
<comment type="similarity">
    <text evidence="1">Belongs to the lambda phage major capsid protein family.</text>
</comment>
<sequence>MRPIPSLQNNFEYTDLTEPMILIPNVWGLTQQLGIFGVDRTTQESVTLEEITKSFGLMEDIHRGARHQVGRDYDRQMRTFAVPHFTYDDYITPRDIQGKRAYGKQELETLDQVRMRKLERLRGTHAATMEFARMHTLVTGKPYTPNNTVGGATGYDWYQEFGKTRFEVNFELDTPTTNILEKSELVYAHMQDEAYTGGVVGDVIAICSPEFFSKLISHPTVVEAYKYYASQPQILRERLRARGFDARYREFYFGNVLYIEYRGGFQGRPGGEKRRYVPAGEAVFIPGSGTEDLFKTFFAPASKFEHVNTPGEESYAFEYVDPKGEFLEINSETNFINVLMYPQLVVKGKAA</sequence>
<feature type="chain" id="PRO_0000414623" description="Major capsid protein">
    <location>
        <begin position="1"/>
        <end position="351"/>
    </location>
</feature>
<reference evidence="4" key="1">
    <citation type="journal article" date="2009" name="Microbiol. Immunol.">
        <title>Blood kinetics of four intraperitoneally administered therapeutic candidate bacteriophages in healthy and neutropenic mice.</title>
        <authorList>
            <person name="Uchiyama J."/>
            <person name="Maeda Y."/>
            <person name="Takemura I."/>
            <person name="Chess-Williams R."/>
            <person name="Wakiguchi H."/>
            <person name="Matsuzaki S."/>
        </authorList>
    </citation>
    <scope>NUCLEOTIDE SEQUENCE [GENOMIC DNA]</scope>
</reference>
<reference evidence="3" key="2">
    <citation type="journal article" date="2012" name="Arch. Virol.">
        <title>Genetic characterization of Pseudomonas aeruginosa bacteriophage KPP10.</title>
        <authorList>
            <person name="Uchiyama J."/>
            <person name="Rashel M."/>
            <person name="Takemura I."/>
            <person name="Kato S."/>
            <person name="Ujihara T."/>
            <person name="Muraoka A."/>
            <person name="Matsuzaki S."/>
            <person name="Daibata M."/>
        </authorList>
    </citation>
    <scope>PROTEIN SEQUENCE OF 1-20</scope>
    <scope>IDENTIFICATION</scope>
    <scope>SUBCELLULAR LOCATION</scope>
    <scope>FUNCTION</scope>
</reference>
<organismHost>
    <name type="scientific">Pseudomonas aeruginosa</name>
    <dbReference type="NCBI Taxonomy" id="287"/>
</organismHost>
<dbReference type="EMBL" id="AB472900">
    <property type="protein sequence ID" value="BAJ09125.1"/>
    <property type="molecule type" value="Genomic_DNA"/>
</dbReference>
<dbReference type="RefSeq" id="YP_004306755.1">
    <property type="nucleotide sequence ID" value="NC_015272.2"/>
</dbReference>
<dbReference type="SMR" id="D6RRG1"/>
<dbReference type="KEGG" id="vg:10358729"/>
<dbReference type="OrthoDB" id="9287at10239"/>
<dbReference type="Proteomes" id="UP000000375">
    <property type="component" value="Genome"/>
</dbReference>
<dbReference type="GO" id="GO:0030430">
    <property type="term" value="C:host cell cytoplasm"/>
    <property type="evidence" value="ECO:0007669"/>
    <property type="project" value="UniProtKB-SubCell"/>
</dbReference>
<dbReference type="GO" id="GO:0019028">
    <property type="term" value="C:viral capsid"/>
    <property type="evidence" value="ECO:0007669"/>
    <property type="project" value="UniProtKB-UniRule"/>
</dbReference>
<dbReference type="HAMAP" id="MF_04133">
    <property type="entry name" value="CAPSID_LAMBDA"/>
    <property type="match status" value="1"/>
</dbReference>
<dbReference type="InterPro" id="IPR005564">
    <property type="entry name" value="Major_capsid_GpE"/>
</dbReference>
<dbReference type="Pfam" id="PF03864">
    <property type="entry name" value="Phage_cap_E"/>
    <property type="match status" value="1"/>
</dbReference>
<accession>D6RRG1</accession>
<gene>
    <name type="ORF">ORF4</name>
</gene>
<proteinExistence type="evidence at protein level"/>